<comment type="function">
    <text evidence="1">Binds the 23S rRNA.</text>
</comment>
<comment type="cofactor">
    <cofactor evidence="1">
        <name>Zn(2+)</name>
        <dbReference type="ChEBI" id="CHEBI:29105"/>
    </cofactor>
    <text evidence="1">Binds 1 zinc ion per subunit.</text>
</comment>
<comment type="subunit">
    <text evidence="1">Part of the 50S ribosomal subunit.</text>
</comment>
<comment type="similarity">
    <text evidence="1">Belongs to the bacterial ribosomal protein bL31 family. Type A subfamily.</text>
</comment>
<protein>
    <recommendedName>
        <fullName evidence="1">Large ribosomal subunit protein bL31</fullName>
    </recommendedName>
    <alternativeName>
        <fullName evidence="2">50S ribosomal protein L31</fullName>
    </alternativeName>
</protein>
<evidence type="ECO:0000255" key="1">
    <source>
        <dbReference type="HAMAP-Rule" id="MF_00501"/>
    </source>
</evidence>
<evidence type="ECO:0000305" key="2"/>
<sequence>MKPGIHPEYAVITANCTCGNVIKVNSTAGKDLHLDVCGACHPFYTGTQKVVDTGGRIDKFNKRFGMLGKK</sequence>
<organism>
    <name type="scientific">Shewanella sp. (strain MR-7)</name>
    <dbReference type="NCBI Taxonomy" id="60481"/>
    <lineage>
        <taxon>Bacteria</taxon>
        <taxon>Pseudomonadati</taxon>
        <taxon>Pseudomonadota</taxon>
        <taxon>Gammaproteobacteria</taxon>
        <taxon>Alteromonadales</taxon>
        <taxon>Shewanellaceae</taxon>
        <taxon>Shewanella</taxon>
    </lineage>
</organism>
<proteinExistence type="inferred from homology"/>
<feature type="chain" id="PRO_1000126738" description="Large ribosomal subunit protein bL31">
    <location>
        <begin position="1"/>
        <end position="70"/>
    </location>
</feature>
<feature type="binding site" evidence="1">
    <location>
        <position position="16"/>
    </location>
    <ligand>
        <name>Zn(2+)</name>
        <dbReference type="ChEBI" id="CHEBI:29105"/>
    </ligand>
</feature>
<feature type="binding site" evidence="1">
    <location>
        <position position="18"/>
    </location>
    <ligand>
        <name>Zn(2+)</name>
        <dbReference type="ChEBI" id="CHEBI:29105"/>
    </ligand>
</feature>
<feature type="binding site" evidence="1">
    <location>
        <position position="37"/>
    </location>
    <ligand>
        <name>Zn(2+)</name>
        <dbReference type="ChEBI" id="CHEBI:29105"/>
    </ligand>
</feature>
<feature type="binding site" evidence="1">
    <location>
        <position position="40"/>
    </location>
    <ligand>
        <name>Zn(2+)</name>
        <dbReference type="ChEBI" id="CHEBI:29105"/>
    </ligand>
</feature>
<dbReference type="EMBL" id="CP000444">
    <property type="protein sequence ID" value="ABI41462.1"/>
    <property type="molecule type" value="Genomic_DNA"/>
</dbReference>
<dbReference type="SMR" id="Q0HZJ3"/>
<dbReference type="KEGG" id="shm:Shewmr7_0459"/>
<dbReference type="HOGENOM" id="CLU_114306_4_3_6"/>
<dbReference type="GO" id="GO:1990904">
    <property type="term" value="C:ribonucleoprotein complex"/>
    <property type="evidence" value="ECO:0007669"/>
    <property type="project" value="UniProtKB-KW"/>
</dbReference>
<dbReference type="GO" id="GO:0005840">
    <property type="term" value="C:ribosome"/>
    <property type="evidence" value="ECO:0007669"/>
    <property type="project" value="UniProtKB-KW"/>
</dbReference>
<dbReference type="GO" id="GO:0046872">
    <property type="term" value="F:metal ion binding"/>
    <property type="evidence" value="ECO:0007669"/>
    <property type="project" value="UniProtKB-KW"/>
</dbReference>
<dbReference type="GO" id="GO:0019843">
    <property type="term" value="F:rRNA binding"/>
    <property type="evidence" value="ECO:0007669"/>
    <property type="project" value="UniProtKB-KW"/>
</dbReference>
<dbReference type="GO" id="GO:0003735">
    <property type="term" value="F:structural constituent of ribosome"/>
    <property type="evidence" value="ECO:0007669"/>
    <property type="project" value="InterPro"/>
</dbReference>
<dbReference type="GO" id="GO:0006412">
    <property type="term" value="P:translation"/>
    <property type="evidence" value="ECO:0007669"/>
    <property type="project" value="UniProtKB-UniRule"/>
</dbReference>
<dbReference type="Gene3D" id="4.10.830.30">
    <property type="entry name" value="Ribosomal protein L31"/>
    <property type="match status" value="1"/>
</dbReference>
<dbReference type="HAMAP" id="MF_00501">
    <property type="entry name" value="Ribosomal_bL31_1"/>
    <property type="match status" value="1"/>
</dbReference>
<dbReference type="InterPro" id="IPR034704">
    <property type="entry name" value="Ribosomal_bL28/bL31-like_sf"/>
</dbReference>
<dbReference type="InterPro" id="IPR002150">
    <property type="entry name" value="Ribosomal_bL31"/>
</dbReference>
<dbReference type="InterPro" id="IPR027491">
    <property type="entry name" value="Ribosomal_bL31_A"/>
</dbReference>
<dbReference type="InterPro" id="IPR042105">
    <property type="entry name" value="Ribosomal_bL31_sf"/>
</dbReference>
<dbReference type="NCBIfam" id="TIGR00105">
    <property type="entry name" value="L31"/>
    <property type="match status" value="1"/>
</dbReference>
<dbReference type="NCBIfam" id="NF000612">
    <property type="entry name" value="PRK00019.1"/>
    <property type="match status" value="1"/>
</dbReference>
<dbReference type="NCBIfam" id="NF001809">
    <property type="entry name" value="PRK00528.1"/>
    <property type="match status" value="1"/>
</dbReference>
<dbReference type="PANTHER" id="PTHR33280">
    <property type="entry name" value="50S RIBOSOMAL PROTEIN L31, CHLOROPLASTIC"/>
    <property type="match status" value="1"/>
</dbReference>
<dbReference type="PANTHER" id="PTHR33280:SF6">
    <property type="entry name" value="LARGE RIBOSOMAL SUBUNIT PROTEIN BL31A"/>
    <property type="match status" value="1"/>
</dbReference>
<dbReference type="Pfam" id="PF01197">
    <property type="entry name" value="Ribosomal_L31"/>
    <property type="match status" value="1"/>
</dbReference>
<dbReference type="PRINTS" id="PR01249">
    <property type="entry name" value="RIBOSOMALL31"/>
</dbReference>
<dbReference type="SUPFAM" id="SSF143800">
    <property type="entry name" value="L28p-like"/>
    <property type="match status" value="1"/>
</dbReference>
<dbReference type="PROSITE" id="PS01143">
    <property type="entry name" value="RIBOSOMAL_L31"/>
    <property type="match status" value="1"/>
</dbReference>
<name>RL31_SHESR</name>
<gene>
    <name evidence="1" type="primary">rpmE</name>
    <name type="ordered locus">Shewmr7_0459</name>
</gene>
<keyword id="KW-0479">Metal-binding</keyword>
<keyword id="KW-0687">Ribonucleoprotein</keyword>
<keyword id="KW-0689">Ribosomal protein</keyword>
<keyword id="KW-0694">RNA-binding</keyword>
<keyword id="KW-0699">rRNA-binding</keyword>
<keyword id="KW-0862">Zinc</keyword>
<accession>Q0HZJ3</accession>
<reference key="1">
    <citation type="submission" date="2006-08" db="EMBL/GenBank/DDBJ databases">
        <title>Complete sequence of chromosome 1 of Shewanella sp. MR-7.</title>
        <authorList>
            <person name="Copeland A."/>
            <person name="Lucas S."/>
            <person name="Lapidus A."/>
            <person name="Barry K."/>
            <person name="Detter J.C."/>
            <person name="Glavina del Rio T."/>
            <person name="Hammon N."/>
            <person name="Israni S."/>
            <person name="Dalin E."/>
            <person name="Tice H."/>
            <person name="Pitluck S."/>
            <person name="Kiss H."/>
            <person name="Brettin T."/>
            <person name="Bruce D."/>
            <person name="Han C."/>
            <person name="Tapia R."/>
            <person name="Gilna P."/>
            <person name="Schmutz J."/>
            <person name="Larimer F."/>
            <person name="Land M."/>
            <person name="Hauser L."/>
            <person name="Kyrpides N."/>
            <person name="Mikhailova N."/>
            <person name="Nealson K."/>
            <person name="Konstantinidis K."/>
            <person name="Klappenbach J."/>
            <person name="Tiedje J."/>
            <person name="Richardson P."/>
        </authorList>
    </citation>
    <scope>NUCLEOTIDE SEQUENCE [LARGE SCALE GENOMIC DNA]</scope>
    <source>
        <strain>MR-7</strain>
    </source>
</reference>